<name>YEAC_PSEHA</name>
<reference key="1">
    <citation type="journal article" date="1992" name="Mol. Microbiol.">
        <title>Identification and sequence of a Na(+)-linked gene from the marine bacterium Alteromonas haloplanktis which functionally complements the dagA gene of Escherichia coli.</title>
        <authorList>
            <person name="Macleod P.R."/>
            <person name="Macleod R.A."/>
        </authorList>
    </citation>
    <scope>NUCLEOTIDE SEQUENCE [GENOMIC DNA]</scope>
    <source>
        <strain>ATCC 19855 / CIP 104258 / JCM 20771 / LMG 2874 / NCIMB 19 / B-16</strain>
    </source>
</reference>
<dbReference type="EMBL" id="M59081">
    <property type="status" value="NOT_ANNOTATED_CDS"/>
    <property type="molecule type" value="Genomic_DNA"/>
</dbReference>
<dbReference type="eggNOG" id="COG3139">
    <property type="taxonomic scope" value="Bacteria"/>
</dbReference>
<dbReference type="InterPro" id="IPR009749">
    <property type="entry name" value="DUF1315"/>
</dbReference>
<dbReference type="Pfam" id="PF07023">
    <property type="entry name" value="DUF1315"/>
    <property type="match status" value="1"/>
</dbReference>
<organism>
    <name type="scientific">Pseudoalteromonas haloplanktis</name>
    <name type="common">Alteromonas haloplanktis</name>
    <dbReference type="NCBI Taxonomy" id="228"/>
    <lineage>
        <taxon>Bacteria</taxon>
        <taxon>Pseudomonadati</taxon>
        <taxon>Pseudomonadota</taxon>
        <taxon>Gammaproteobacteria</taxon>
        <taxon>Alteromonadales</taxon>
        <taxon>Pseudoalteromonadaceae</taxon>
        <taxon>Pseudoalteromonas</taxon>
    </lineage>
</organism>
<accession>P56607</accession>
<comment type="similarity">
    <text evidence="1">To E.coli YeaC.</text>
</comment>
<sequence>MNIDNLVQNITPELFERLQYGAATGKWPDGTPLSDEQKQQTVQLVMLYQAKVAQSNEQFTIGANGEMVQKTKAQLQKEFNSDNEIARFSEHDL</sequence>
<feature type="chain" id="PRO_0000169011" description="Uncharacterized protein in dagA 3'region">
    <location>
        <begin position="1"/>
        <end position="93"/>
    </location>
</feature>
<proteinExistence type="predicted"/>
<evidence type="ECO:0000305" key="1"/>
<protein>
    <recommendedName>
        <fullName>Uncharacterized protein in dagA 3'region</fullName>
    </recommendedName>
</protein>